<sequence>MKYVGAHVSASGGLANAAIRAAEIEATAFALFTKNQRQWRAAPLSDETIAEFKAACEKYHFGPGQILPHDSYLINLGHPVEEALEKSRDAFIDEMTRCQQLGLTLLNFHPGSHLQQIPEEECLARIAESINIALAKTEGVTAVIENTAGQGSNLGFKFEHLAAIIDGVEDKSRVGVCIDTCHAFAAGYDLRSAEACEKTFAAFERIVGFQYLRGMHLNDAKSAFGSRVDRHHSLGEGNIGHDCFSWIMQDSRFDGIPLILETINPDIWAEEIAWLRAQQIAEVA</sequence>
<evidence type="ECO:0000255" key="1">
    <source>
        <dbReference type="HAMAP-Rule" id="MF_00152"/>
    </source>
</evidence>
<name>END4_KLEP7</name>
<keyword id="KW-0227">DNA damage</keyword>
<keyword id="KW-0234">DNA repair</keyword>
<keyword id="KW-0255">Endonuclease</keyword>
<keyword id="KW-0378">Hydrolase</keyword>
<keyword id="KW-0479">Metal-binding</keyword>
<keyword id="KW-0540">Nuclease</keyword>
<keyword id="KW-0862">Zinc</keyword>
<feature type="chain" id="PRO_1000011310" description="Probable endonuclease 4">
    <location>
        <begin position="1"/>
        <end position="284"/>
    </location>
</feature>
<feature type="binding site" evidence="1">
    <location>
        <position position="69"/>
    </location>
    <ligand>
        <name>Zn(2+)</name>
        <dbReference type="ChEBI" id="CHEBI:29105"/>
        <label>1</label>
    </ligand>
</feature>
<feature type="binding site" evidence="1">
    <location>
        <position position="109"/>
    </location>
    <ligand>
        <name>Zn(2+)</name>
        <dbReference type="ChEBI" id="CHEBI:29105"/>
        <label>1</label>
    </ligand>
</feature>
<feature type="binding site" evidence="1">
    <location>
        <position position="145"/>
    </location>
    <ligand>
        <name>Zn(2+)</name>
        <dbReference type="ChEBI" id="CHEBI:29105"/>
        <label>1</label>
    </ligand>
</feature>
<feature type="binding site" evidence="1">
    <location>
        <position position="145"/>
    </location>
    <ligand>
        <name>Zn(2+)</name>
        <dbReference type="ChEBI" id="CHEBI:29105"/>
        <label>2</label>
    </ligand>
</feature>
<feature type="binding site" evidence="1">
    <location>
        <position position="179"/>
    </location>
    <ligand>
        <name>Zn(2+)</name>
        <dbReference type="ChEBI" id="CHEBI:29105"/>
        <label>2</label>
    </ligand>
</feature>
<feature type="binding site" evidence="1">
    <location>
        <position position="182"/>
    </location>
    <ligand>
        <name>Zn(2+)</name>
        <dbReference type="ChEBI" id="CHEBI:29105"/>
        <label>3</label>
    </ligand>
</feature>
<feature type="binding site" evidence="1">
    <location>
        <position position="216"/>
    </location>
    <ligand>
        <name>Zn(2+)</name>
        <dbReference type="ChEBI" id="CHEBI:29105"/>
        <label>2</label>
    </ligand>
</feature>
<feature type="binding site" evidence="1">
    <location>
        <position position="229"/>
    </location>
    <ligand>
        <name>Zn(2+)</name>
        <dbReference type="ChEBI" id="CHEBI:29105"/>
        <label>3</label>
    </ligand>
</feature>
<feature type="binding site" evidence="1">
    <location>
        <position position="231"/>
    </location>
    <ligand>
        <name>Zn(2+)</name>
        <dbReference type="ChEBI" id="CHEBI:29105"/>
        <label>3</label>
    </ligand>
</feature>
<feature type="binding site" evidence="1">
    <location>
        <position position="261"/>
    </location>
    <ligand>
        <name>Zn(2+)</name>
        <dbReference type="ChEBI" id="CHEBI:29105"/>
        <label>2</label>
    </ligand>
</feature>
<protein>
    <recommendedName>
        <fullName evidence="1">Probable endonuclease 4</fullName>
        <ecNumber evidence="1">3.1.21.2</ecNumber>
    </recommendedName>
    <alternativeName>
        <fullName evidence="1">Endodeoxyribonuclease IV</fullName>
    </alternativeName>
    <alternativeName>
        <fullName evidence="1">Endonuclease IV</fullName>
    </alternativeName>
</protein>
<reference key="1">
    <citation type="submission" date="2006-09" db="EMBL/GenBank/DDBJ databases">
        <authorList>
            <consortium name="The Klebsiella pneumonia Genome Sequencing Project"/>
            <person name="McClelland M."/>
            <person name="Sanderson E.K."/>
            <person name="Spieth J."/>
            <person name="Clifton W.S."/>
            <person name="Latreille P."/>
            <person name="Sabo A."/>
            <person name="Pepin K."/>
            <person name="Bhonagiri V."/>
            <person name="Porwollik S."/>
            <person name="Ali J."/>
            <person name="Wilson R.K."/>
        </authorList>
    </citation>
    <scope>NUCLEOTIDE SEQUENCE [LARGE SCALE GENOMIC DNA]</scope>
    <source>
        <strain>ATCC 700721 / MGH 78578</strain>
    </source>
</reference>
<gene>
    <name evidence="1" type="primary">nfo</name>
    <name type="ordered locus">KPN78578_25540</name>
    <name type="ORF">KPN_02597</name>
</gene>
<organism>
    <name type="scientific">Klebsiella pneumoniae subsp. pneumoniae (strain ATCC 700721 / MGH 78578)</name>
    <dbReference type="NCBI Taxonomy" id="272620"/>
    <lineage>
        <taxon>Bacteria</taxon>
        <taxon>Pseudomonadati</taxon>
        <taxon>Pseudomonadota</taxon>
        <taxon>Gammaproteobacteria</taxon>
        <taxon>Enterobacterales</taxon>
        <taxon>Enterobacteriaceae</taxon>
        <taxon>Klebsiella/Raoultella group</taxon>
        <taxon>Klebsiella</taxon>
        <taxon>Klebsiella pneumoniae complex</taxon>
    </lineage>
</organism>
<comment type="function">
    <text evidence="1">Endonuclease IV plays a role in DNA repair. It cleaves phosphodiester bonds at apurinic or apyrimidinic (AP) sites, generating a 3'-hydroxyl group and a 5'-terminal sugar phosphate.</text>
</comment>
<comment type="catalytic activity">
    <reaction evidence="1">
        <text>Endonucleolytic cleavage to 5'-phosphooligonucleotide end-products.</text>
        <dbReference type="EC" id="3.1.21.2"/>
    </reaction>
</comment>
<comment type="cofactor">
    <cofactor evidence="1">
        <name>Zn(2+)</name>
        <dbReference type="ChEBI" id="CHEBI:29105"/>
    </cofactor>
    <text evidence="1">Binds 3 Zn(2+) ions.</text>
</comment>
<comment type="similarity">
    <text evidence="1">Belongs to the AP endonuclease 2 family.</text>
</comment>
<accession>A6TBP4</accession>
<dbReference type="EC" id="3.1.21.2" evidence="1"/>
<dbReference type="EMBL" id="CP000647">
    <property type="protein sequence ID" value="ABR78015.1"/>
    <property type="molecule type" value="Genomic_DNA"/>
</dbReference>
<dbReference type="RefSeq" id="WP_002912937.1">
    <property type="nucleotide sequence ID" value="NC_009648.1"/>
</dbReference>
<dbReference type="SMR" id="A6TBP4"/>
<dbReference type="STRING" id="272620.KPN_02597"/>
<dbReference type="PaxDb" id="272620-KPN_02597"/>
<dbReference type="EnsemblBacteria" id="ABR78015">
    <property type="protein sequence ID" value="ABR78015"/>
    <property type="gene ID" value="KPN_02597"/>
</dbReference>
<dbReference type="KEGG" id="kpn:KPN_02597"/>
<dbReference type="HOGENOM" id="CLU_025885_0_4_6"/>
<dbReference type="Proteomes" id="UP000000265">
    <property type="component" value="Chromosome"/>
</dbReference>
<dbReference type="GO" id="GO:0008833">
    <property type="term" value="F:deoxyribonuclease IV (phage-T4-induced) activity"/>
    <property type="evidence" value="ECO:0007669"/>
    <property type="project" value="UniProtKB-UniRule"/>
</dbReference>
<dbReference type="GO" id="GO:0003677">
    <property type="term" value="F:DNA binding"/>
    <property type="evidence" value="ECO:0007669"/>
    <property type="project" value="InterPro"/>
</dbReference>
<dbReference type="GO" id="GO:0003906">
    <property type="term" value="F:DNA-(apurinic or apyrimidinic site) endonuclease activity"/>
    <property type="evidence" value="ECO:0007669"/>
    <property type="project" value="TreeGrafter"/>
</dbReference>
<dbReference type="GO" id="GO:0008081">
    <property type="term" value="F:phosphoric diester hydrolase activity"/>
    <property type="evidence" value="ECO:0007669"/>
    <property type="project" value="TreeGrafter"/>
</dbReference>
<dbReference type="GO" id="GO:0008270">
    <property type="term" value="F:zinc ion binding"/>
    <property type="evidence" value="ECO:0007669"/>
    <property type="project" value="UniProtKB-UniRule"/>
</dbReference>
<dbReference type="GO" id="GO:0006284">
    <property type="term" value="P:base-excision repair"/>
    <property type="evidence" value="ECO:0007669"/>
    <property type="project" value="TreeGrafter"/>
</dbReference>
<dbReference type="CDD" id="cd00019">
    <property type="entry name" value="AP2Ec"/>
    <property type="match status" value="1"/>
</dbReference>
<dbReference type="FunFam" id="3.20.20.150:FF:000001">
    <property type="entry name" value="Probable endonuclease 4"/>
    <property type="match status" value="1"/>
</dbReference>
<dbReference type="Gene3D" id="3.20.20.150">
    <property type="entry name" value="Divalent-metal-dependent TIM barrel enzymes"/>
    <property type="match status" value="1"/>
</dbReference>
<dbReference type="HAMAP" id="MF_00152">
    <property type="entry name" value="Nfo"/>
    <property type="match status" value="1"/>
</dbReference>
<dbReference type="InterPro" id="IPR001719">
    <property type="entry name" value="AP_endonuc_2"/>
</dbReference>
<dbReference type="InterPro" id="IPR018246">
    <property type="entry name" value="AP_endonuc_F2_Zn_BS"/>
</dbReference>
<dbReference type="InterPro" id="IPR036237">
    <property type="entry name" value="Xyl_isomerase-like_sf"/>
</dbReference>
<dbReference type="InterPro" id="IPR013022">
    <property type="entry name" value="Xyl_isomerase-like_TIM-brl"/>
</dbReference>
<dbReference type="NCBIfam" id="TIGR00587">
    <property type="entry name" value="nfo"/>
    <property type="match status" value="1"/>
</dbReference>
<dbReference type="NCBIfam" id="NF002199">
    <property type="entry name" value="PRK01060.1-4"/>
    <property type="match status" value="1"/>
</dbReference>
<dbReference type="PANTHER" id="PTHR21445:SF0">
    <property type="entry name" value="APURINIC-APYRIMIDINIC ENDONUCLEASE"/>
    <property type="match status" value="1"/>
</dbReference>
<dbReference type="PANTHER" id="PTHR21445">
    <property type="entry name" value="ENDONUCLEASE IV ENDODEOXYRIBONUCLEASE IV"/>
    <property type="match status" value="1"/>
</dbReference>
<dbReference type="Pfam" id="PF01261">
    <property type="entry name" value="AP_endonuc_2"/>
    <property type="match status" value="1"/>
</dbReference>
<dbReference type="SMART" id="SM00518">
    <property type="entry name" value="AP2Ec"/>
    <property type="match status" value="1"/>
</dbReference>
<dbReference type="SUPFAM" id="SSF51658">
    <property type="entry name" value="Xylose isomerase-like"/>
    <property type="match status" value="1"/>
</dbReference>
<dbReference type="PROSITE" id="PS00729">
    <property type="entry name" value="AP_NUCLEASE_F2_1"/>
    <property type="match status" value="1"/>
</dbReference>
<dbReference type="PROSITE" id="PS00730">
    <property type="entry name" value="AP_NUCLEASE_F2_2"/>
    <property type="match status" value="1"/>
</dbReference>
<dbReference type="PROSITE" id="PS00731">
    <property type="entry name" value="AP_NUCLEASE_F2_3"/>
    <property type="match status" value="1"/>
</dbReference>
<dbReference type="PROSITE" id="PS51432">
    <property type="entry name" value="AP_NUCLEASE_F2_4"/>
    <property type="match status" value="1"/>
</dbReference>
<proteinExistence type="inferred from homology"/>